<keyword id="KW-0028">Amino-acid biosynthesis</keyword>
<keyword id="KW-0223">Dioxygenase</keyword>
<keyword id="KW-0408">Iron</keyword>
<keyword id="KW-0479">Metal-binding</keyword>
<keyword id="KW-0486">Methionine biosynthesis</keyword>
<keyword id="KW-0533">Nickel</keyword>
<keyword id="KW-0560">Oxidoreductase</keyword>
<keyword id="KW-1185">Reference proteome</keyword>
<reference key="1">
    <citation type="journal article" date="2004" name="Proc. Natl. Acad. Sci. U.S.A.">
        <title>Genome sequence of the enterobacterial phytopathogen Erwinia carotovora subsp. atroseptica and characterization of virulence factors.</title>
        <authorList>
            <person name="Bell K.S."/>
            <person name="Sebaihia M."/>
            <person name="Pritchard L."/>
            <person name="Holden M.T.G."/>
            <person name="Hyman L.J."/>
            <person name="Holeva M.C."/>
            <person name="Thomson N.R."/>
            <person name="Bentley S.D."/>
            <person name="Churcher L.J.C."/>
            <person name="Mungall K."/>
            <person name="Atkin R."/>
            <person name="Bason N."/>
            <person name="Brooks K."/>
            <person name="Chillingworth T."/>
            <person name="Clark K."/>
            <person name="Doggett J."/>
            <person name="Fraser A."/>
            <person name="Hance Z."/>
            <person name="Hauser H."/>
            <person name="Jagels K."/>
            <person name="Moule S."/>
            <person name="Norbertczak H."/>
            <person name="Ormond D."/>
            <person name="Price C."/>
            <person name="Quail M.A."/>
            <person name="Sanders M."/>
            <person name="Walker D."/>
            <person name="Whitehead S."/>
            <person name="Salmond G.P.C."/>
            <person name="Birch P.R.J."/>
            <person name="Parkhill J."/>
            <person name="Toth I.K."/>
        </authorList>
    </citation>
    <scope>NUCLEOTIDE SEQUENCE [LARGE SCALE GENOMIC DNA]</scope>
    <source>
        <strain>SCRI 1043 / ATCC BAA-672</strain>
    </source>
</reference>
<comment type="function">
    <text evidence="1">Catalyzes 2 different reactions between oxygen and the acireductone 1,2-dihydroxy-3-keto-5-methylthiopentene (DHK-MTPene) depending upon the metal bound in the active site. Fe-containing acireductone dioxygenase (Fe-ARD) produces formate and 2-keto-4-methylthiobutyrate (KMTB), the alpha-ketoacid precursor of methionine in the methionine recycle pathway. Ni-containing acireductone dioxygenase (Ni-ARD) produces methylthiopropionate, carbon monoxide and formate, and does not lie on the methionine recycle pathway.</text>
</comment>
<comment type="catalytic activity">
    <reaction evidence="1">
        <text>1,2-dihydroxy-5-(methylsulfanyl)pent-1-en-3-one + O2 = 3-(methylsulfanyl)propanoate + CO + formate + 2 H(+)</text>
        <dbReference type="Rhea" id="RHEA:14161"/>
        <dbReference type="ChEBI" id="CHEBI:15378"/>
        <dbReference type="ChEBI" id="CHEBI:15379"/>
        <dbReference type="ChEBI" id="CHEBI:15740"/>
        <dbReference type="ChEBI" id="CHEBI:17245"/>
        <dbReference type="ChEBI" id="CHEBI:49016"/>
        <dbReference type="ChEBI" id="CHEBI:49252"/>
        <dbReference type="EC" id="1.13.11.53"/>
    </reaction>
</comment>
<comment type="catalytic activity">
    <reaction evidence="1">
        <text>1,2-dihydroxy-5-(methylsulfanyl)pent-1-en-3-one + O2 = 4-methylsulfanyl-2-oxobutanoate + formate + 2 H(+)</text>
        <dbReference type="Rhea" id="RHEA:24504"/>
        <dbReference type="ChEBI" id="CHEBI:15378"/>
        <dbReference type="ChEBI" id="CHEBI:15379"/>
        <dbReference type="ChEBI" id="CHEBI:15740"/>
        <dbReference type="ChEBI" id="CHEBI:16723"/>
        <dbReference type="ChEBI" id="CHEBI:49252"/>
        <dbReference type="EC" id="1.13.11.54"/>
    </reaction>
</comment>
<comment type="cofactor">
    <cofactor evidence="1">
        <name>Fe(2+)</name>
        <dbReference type="ChEBI" id="CHEBI:29033"/>
    </cofactor>
    <text evidence="1">Binds 1 Fe(2+) cation per monomer.</text>
</comment>
<comment type="cofactor">
    <cofactor evidence="1">
        <name>Ni(2+)</name>
        <dbReference type="ChEBI" id="CHEBI:49786"/>
    </cofactor>
    <text evidence="1">Binds 1 nickel ion per monomer.</text>
</comment>
<comment type="pathway">
    <text evidence="1">Amino-acid biosynthesis; L-methionine biosynthesis via salvage pathway; L-methionine from S-methyl-5-thio-alpha-D-ribose 1-phosphate: step 5/6.</text>
</comment>
<comment type="subunit">
    <text evidence="1">Monomer.</text>
</comment>
<comment type="similarity">
    <text evidence="1">Belongs to the acireductone dioxygenase (ARD) family.</text>
</comment>
<feature type="chain" id="PRO_0000359188" description="Acireductone dioxygenase 1">
    <location>
        <begin position="1"/>
        <end position="173"/>
    </location>
</feature>
<feature type="binding site" evidence="1">
    <location>
        <position position="96"/>
    </location>
    <ligand>
        <name>Fe(2+)</name>
        <dbReference type="ChEBI" id="CHEBI:29033"/>
    </ligand>
</feature>
<feature type="binding site" evidence="1">
    <location>
        <position position="96"/>
    </location>
    <ligand>
        <name>Ni(2+)</name>
        <dbReference type="ChEBI" id="CHEBI:49786"/>
    </ligand>
</feature>
<feature type="binding site" evidence="1">
    <location>
        <position position="98"/>
    </location>
    <ligand>
        <name>Fe(2+)</name>
        <dbReference type="ChEBI" id="CHEBI:29033"/>
    </ligand>
</feature>
<feature type="binding site" evidence="1">
    <location>
        <position position="98"/>
    </location>
    <ligand>
        <name>Ni(2+)</name>
        <dbReference type="ChEBI" id="CHEBI:49786"/>
    </ligand>
</feature>
<feature type="binding site" evidence="1">
    <location>
        <position position="102"/>
    </location>
    <ligand>
        <name>Fe(2+)</name>
        <dbReference type="ChEBI" id="CHEBI:29033"/>
    </ligand>
</feature>
<feature type="binding site" evidence="1">
    <location>
        <position position="102"/>
    </location>
    <ligand>
        <name>Ni(2+)</name>
        <dbReference type="ChEBI" id="CHEBI:49786"/>
    </ligand>
</feature>
<feature type="binding site" evidence="1">
    <location>
        <position position="140"/>
    </location>
    <ligand>
        <name>Fe(2+)</name>
        <dbReference type="ChEBI" id="CHEBI:29033"/>
    </ligand>
</feature>
<feature type="binding site" evidence="1">
    <location>
        <position position="140"/>
    </location>
    <ligand>
        <name>Ni(2+)</name>
        <dbReference type="ChEBI" id="CHEBI:49786"/>
    </ligand>
</feature>
<feature type="site" description="May play a role in metal incorporation in vivo" evidence="1">
    <location>
        <position position="95"/>
    </location>
</feature>
<feature type="site" description="May play a role in transmitting local conformational changes" evidence="1">
    <location>
        <position position="101"/>
    </location>
</feature>
<feature type="site" description="Important to generate the dianion" evidence="1">
    <location>
        <position position="104"/>
    </location>
</feature>
<organism>
    <name type="scientific">Pectobacterium atrosepticum (strain SCRI 1043 / ATCC BAA-672)</name>
    <name type="common">Erwinia carotovora subsp. atroseptica</name>
    <dbReference type="NCBI Taxonomy" id="218491"/>
    <lineage>
        <taxon>Bacteria</taxon>
        <taxon>Pseudomonadati</taxon>
        <taxon>Pseudomonadota</taxon>
        <taxon>Gammaproteobacteria</taxon>
        <taxon>Enterobacterales</taxon>
        <taxon>Pectobacteriaceae</taxon>
        <taxon>Pectobacterium</taxon>
    </lineage>
</organism>
<dbReference type="EC" id="1.13.11.54" evidence="1"/>
<dbReference type="EC" id="1.13.11.53" evidence="1"/>
<dbReference type="EMBL" id="BX950851">
    <property type="protein sequence ID" value="CAG75886.1"/>
    <property type="molecule type" value="Genomic_DNA"/>
</dbReference>
<dbReference type="RefSeq" id="WP_011094517.1">
    <property type="nucleotide sequence ID" value="NC_004547.2"/>
</dbReference>
<dbReference type="SMR" id="Q6D2V8"/>
<dbReference type="STRING" id="218491.ECA2986"/>
<dbReference type="KEGG" id="eca:ECA2986"/>
<dbReference type="PATRIC" id="fig|218491.5.peg.3018"/>
<dbReference type="eggNOG" id="COG1791">
    <property type="taxonomic scope" value="Bacteria"/>
</dbReference>
<dbReference type="HOGENOM" id="CLU_125400_0_0_6"/>
<dbReference type="OrthoDB" id="9795636at2"/>
<dbReference type="UniPathway" id="UPA00904">
    <property type="reaction ID" value="UER00878"/>
</dbReference>
<dbReference type="Proteomes" id="UP000007966">
    <property type="component" value="Chromosome"/>
</dbReference>
<dbReference type="GO" id="GO:0010308">
    <property type="term" value="F:acireductone dioxygenase (Ni2+-requiring) activity"/>
    <property type="evidence" value="ECO:0007669"/>
    <property type="project" value="UniProtKB-UniRule"/>
</dbReference>
<dbReference type="GO" id="GO:0010309">
    <property type="term" value="F:acireductone dioxygenase [iron(II)-requiring] activity"/>
    <property type="evidence" value="ECO:0007669"/>
    <property type="project" value="UniProtKB-UniRule"/>
</dbReference>
<dbReference type="GO" id="GO:0005506">
    <property type="term" value="F:iron ion binding"/>
    <property type="evidence" value="ECO:0007669"/>
    <property type="project" value="UniProtKB-UniRule"/>
</dbReference>
<dbReference type="GO" id="GO:0016151">
    <property type="term" value="F:nickel cation binding"/>
    <property type="evidence" value="ECO:0007669"/>
    <property type="project" value="UniProtKB-UniRule"/>
</dbReference>
<dbReference type="GO" id="GO:0019509">
    <property type="term" value="P:L-methionine salvage from methylthioadenosine"/>
    <property type="evidence" value="ECO:0007669"/>
    <property type="project" value="UniProtKB-UniRule"/>
</dbReference>
<dbReference type="GO" id="GO:0019284">
    <property type="term" value="P:L-methionine salvage from S-adenosylmethionine"/>
    <property type="evidence" value="ECO:0007669"/>
    <property type="project" value="InterPro"/>
</dbReference>
<dbReference type="CDD" id="cd02232">
    <property type="entry name" value="cupin_ARD"/>
    <property type="match status" value="1"/>
</dbReference>
<dbReference type="Gene3D" id="2.60.120.10">
    <property type="entry name" value="Jelly Rolls"/>
    <property type="match status" value="1"/>
</dbReference>
<dbReference type="HAMAP" id="MF_01682">
    <property type="entry name" value="Salvage_MtnD"/>
    <property type="match status" value="1"/>
</dbReference>
<dbReference type="InterPro" id="IPR004313">
    <property type="entry name" value="ARD"/>
</dbReference>
<dbReference type="InterPro" id="IPR023956">
    <property type="entry name" value="ARD_bac"/>
</dbReference>
<dbReference type="InterPro" id="IPR014710">
    <property type="entry name" value="RmlC-like_jellyroll"/>
</dbReference>
<dbReference type="InterPro" id="IPR011051">
    <property type="entry name" value="RmlC_Cupin_sf"/>
</dbReference>
<dbReference type="PANTHER" id="PTHR23418">
    <property type="entry name" value="ACIREDUCTONE DIOXYGENASE"/>
    <property type="match status" value="1"/>
</dbReference>
<dbReference type="PANTHER" id="PTHR23418:SF0">
    <property type="entry name" value="ACIREDUCTONE DIOXYGENASE"/>
    <property type="match status" value="1"/>
</dbReference>
<dbReference type="Pfam" id="PF03079">
    <property type="entry name" value="ARD"/>
    <property type="match status" value="1"/>
</dbReference>
<dbReference type="SUPFAM" id="SSF51182">
    <property type="entry name" value="RmlC-like cupins"/>
    <property type="match status" value="1"/>
</dbReference>
<accession>Q6D2V8</accession>
<evidence type="ECO:0000255" key="1">
    <source>
        <dbReference type="HAMAP-Rule" id="MF_01682"/>
    </source>
</evidence>
<sequence length="173" mass="19630">MTTLSIYHRPHITQPIQQLTAFNDIASLLASAGIQLEHWQAEAPPLNASSETILTQYHADIERLKQQEGYTSADVISLTPNHAERKALREKFLQEHTHSEDEVRFFVRGSGAFFVPIGEQVFQLTCEAGDLLRVPANTPHWFDCGEFPDFVAIRIFTNPEGWVGHFTGRETFH</sequence>
<protein>
    <recommendedName>
        <fullName evidence="1">Acireductone dioxygenase 1</fullName>
    </recommendedName>
    <alternativeName>
        <fullName evidence="1">1,2-dihydroxy-3-keto-5-methylthiopentene dioxygenase 1</fullName>
        <shortName evidence="1">DHK-MTPene dioxygenase 1</shortName>
    </alternativeName>
    <alternativeName>
        <fullName evidence="1">Acireductone dioxygenase (Fe(2+)-requiring) 1</fullName>
        <shortName evidence="1">ARD' 1</shortName>
        <shortName evidence="1">Fe-ARD 1</shortName>
        <ecNumber evidence="1">1.13.11.54</ecNumber>
    </alternativeName>
    <alternativeName>
        <fullName evidence="1">Acireductone dioxygenase (Ni(2+)-requiring) 1</fullName>
        <shortName evidence="1">ARD 1</shortName>
        <shortName evidence="1">Ni-ARD 1</shortName>
        <ecNumber evidence="1">1.13.11.53</ecNumber>
    </alternativeName>
</protein>
<proteinExistence type="inferred from homology"/>
<name>MTND1_PECAS</name>
<gene>
    <name evidence="1" type="primary">mtnD1</name>
    <name type="ordered locus">ECA2986</name>
</gene>